<evidence type="ECO:0000250" key="1"/>
<evidence type="ECO:0000256" key="2">
    <source>
        <dbReference type="SAM" id="MobiDB-lite"/>
    </source>
</evidence>
<evidence type="ECO:0000269" key="3">
    <source>
    </source>
</evidence>
<evidence type="ECO:0000303" key="4">
    <source>
    </source>
</evidence>
<evidence type="ECO:0000305" key="5"/>
<sequence length="938" mass="105981">MERYLPVSKKRNSSSSLEKITGSANGNGTLYSEEDTNLEENDFSWGDYLEETGTRAVPHVSFRHVEISIRSNFQPGMKLEVANKNNPDTYWVATIITTCGQLLLLRYCGYGEDRRADFWCDVIIADLHPVGWCTQNNKVLRPPDAIKDKYSDWTDFLIRELTGSRTAPANLLEGPLRGKGPIDLITVDSLIELQDSQNPFQYWIVSVTENVGGRLRLRYVGLEHTESYDRWLFYLDYRLRPIGWCQENKYRMDPPSDLYYLKLPFEWKCALEKALVLAAESPLPMEVFKDHADLQSHFFTVGMRLETLHISDPFHIYPASVTKVFNSKFFQVAIDDLRPEADKPTMLCHADSLGILPVQWCLKNGVNLAPPKGYSGQDFNWVDYHKQRQAEEAPHFCFKNAFSRGFSKNMKLEAVNPVNPGEVCVATVVSVKGRLLWLHLEGLETPMPDIIVDMDSMDIFPVGWCEANSYPLTTPYKASSKSKRKTVHFKMEKQLLSPVPIEKIPHELCLLPPQMDSPVGAINAKYCCPQLFVNHRCFSGPFLNKGRISELPQSVGPGMCVLVLKEILTLITNAAYKPGRVLRELQLVEDPEWNSQEEILKAKYGGKTYRAVVKIVRTADQVMNFCRQVCAKLECCPNLLSPVLISETCPENCSVHTKTRYTYYYGKRRRVIQSSLRVSNIETPPKSTRRRKRRKSVYVQKRRKSAIVVPAGVPAGVPAGVPEDIPAGIPEGIPASIPESIPEGIPESLPEAIPESIPKGSAQKTEQEKRETLDTARKKTGYHGPAYQTDTSAAQVPFARPRRAVTLRRNSEALKRPPVERARRVRTVPTTASSNNRVKGPLVRIVKPEDSSQSDEEKLILESNPLEWSVTDVVRFIKLTDCAPLARIFQEQDIDGQALLLLTLPTVQECMELKLGPAIKLCHQIERVKVAFYAQYAS</sequence>
<feature type="chain" id="PRO_0000071970" description="Scm-like with four MBT domains protein 2">
    <location>
        <begin position="1"/>
        <end position="938"/>
    </location>
</feature>
<feature type="repeat" description="MBT 1">
    <location>
        <begin position="43"/>
        <end position="143"/>
    </location>
</feature>
<feature type="repeat" description="MBT 2">
    <location>
        <begin position="151"/>
        <end position="255"/>
    </location>
</feature>
<feature type="repeat" description="MBT 3">
    <location>
        <begin position="265"/>
        <end position="371"/>
    </location>
</feature>
<feature type="repeat" description="MBT 4">
    <location>
        <begin position="379"/>
        <end position="475"/>
    </location>
</feature>
<feature type="domain" description="SAM">
    <location>
        <begin position="868"/>
        <end position="931"/>
    </location>
</feature>
<feature type="region of interest" description="Disordered" evidence="2">
    <location>
        <begin position="1"/>
        <end position="32"/>
    </location>
</feature>
<feature type="region of interest" description="Disordered" evidence="2">
    <location>
        <begin position="742"/>
        <end position="836"/>
    </location>
</feature>
<feature type="compositionally biased region" description="Polar residues" evidence="2">
    <location>
        <begin position="13"/>
        <end position="30"/>
    </location>
</feature>
<feature type="compositionally biased region" description="Basic and acidic residues" evidence="2">
    <location>
        <begin position="765"/>
        <end position="777"/>
    </location>
</feature>
<feature type="compositionally biased region" description="Basic and acidic residues" evidence="2">
    <location>
        <begin position="809"/>
        <end position="822"/>
    </location>
</feature>
<feature type="splice variant" id="VSP_013858" description="In isoform 2." evidence="4">
    <original>Y</original>
    <variation>YNKREKGSSLSPASELKDDSASHATKLQKAKIPQ</variation>
    <location>
        <position position="661"/>
    </location>
</feature>
<feature type="splice variant" id="VSP_013859" description="In isoform 2." evidence="4">
    <original>E</original>
    <variation>ESLPE</variation>
    <location>
        <position position="751"/>
    </location>
</feature>
<proteinExistence type="evidence at protein level"/>
<keyword id="KW-0025">Alternative splicing</keyword>
<keyword id="KW-0539">Nucleus</keyword>
<keyword id="KW-1185">Reference proteome</keyword>
<keyword id="KW-0677">Repeat</keyword>
<keyword id="KW-0678">Repressor</keyword>
<gene>
    <name type="primary">Sfmbt2</name>
    <name type="synonym">Kiaa1617</name>
</gene>
<name>SMBT2_MOUSE</name>
<dbReference type="EMBL" id="AK220408">
    <property type="protein sequence ID" value="BAD90456.1"/>
    <property type="status" value="ALT_INIT"/>
    <property type="molecule type" value="mRNA"/>
</dbReference>
<dbReference type="EMBL" id="AY217748">
    <property type="protein sequence ID" value="AAO61788.1"/>
    <property type="molecule type" value="mRNA"/>
</dbReference>
<dbReference type="CCDS" id="CCDS57152.1">
    <molecule id="Q5DTW2-2"/>
</dbReference>
<dbReference type="SMR" id="Q5DTW2"/>
<dbReference type="FunCoup" id="Q5DTW2">
    <property type="interactions" value="1529"/>
</dbReference>
<dbReference type="STRING" id="10090.ENSMUSP00000040575"/>
<dbReference type="iPTMnet" id="Q5DTW2"/>
<dbReference type="PhosphoSitePlus" id="Q5DTW2"/>
<dbReference type="PaxDb" id="10090-ENSMUSP00000040575"/>
<dbReference type="ProteomicsDB" id="257201">
    <molecule id="Q5DTW2-1"/>
</dbReference>
<dbReference type="ProteomicsDB" id="257202">
    <molecule id="Q5DTW2-2"/>
</dbReference>
<dbReference type="AGR" id="MGI:2447794"/>
<dbReference type="MGI" id="MGI:2447794">
    <property type="gene designation" value="Sfmbt2"/>
</dbReference>
<dbReference type="eggNOG" id="KOG3766">
    <property type="taxonomic scope" value="Eukaryota"/>
</dbReference>
<dbReference type="InParanoid" id="Q5DTW2"/>
<dbReference type="ChiTaRS" id="Sfmbt2">
    <property type="organism name" value="mouse"/>
</dbReference>
<dbReference type="PRO" id="PR:Q5DTW2"/>
<dbReference type="Proteomes" id="UP000000589">
    <property type="component" value="Unplaced"/>
</dbReference>
<dbReference type="RNAct" id="Q5DTW2">
    <property type="molecule type" value="protein"/>
</dbReference>
<dbReference type="GO" id="GO:0005634">
    <property type="term" value="C:nucleus"/>
    <property type="evidence" value="ECO:0000250"/>
    <property type="project" value="UniProtKB"/>
</dbReference>
<dbReference type="GO" id="GO:0042393">
    <property type="term" value="F:histone binding"/>
    <property type="evidence" value="ECO:0000250"/>
    <property type="project" value="UniProtKB"/>
</dbReference>
<dbReference type="GO" id="GO:0003714">
    <property type="term" value="F:transcription corepressor activity"/>
    <property type="evidence" value="ECO:0007669"/>
    <property type="project" value="InterPro"/>
</dbReference>
<dbReference type="GO" id="GO:0010629">
    <property type="term" value="P:negative regulation of gene expression"/>
    <property type="evidence" value="ECO:0000250"/>
    <property type="project" value="UniProtKB"/>
</dbReference>
<dbReference type="CDD" id="cd20112">
    <property type="entry name" value="MBT_SFMBT2_rpt1"/>
    <property type="match status" value="1"/>
</dbReference>
<dbReference type="CDD" id="cd20116">
    <property type="entry name" value="MBT_SFMBT2_rpt3"/>
    <property type="match status" value="1"/>
</dbReference>
<dbReference type="CDD" id="cd20118">
    <property type="entry name" value="MBT_SFMBT2_rpt4"/>
    <property type="match status" value="1"/>
</dbReference>
<dbReference type="CDD" id="cd09581">
    <property type="entry name" value="SAM_Scm-like-4MBT1_2"/>
    <property type="match status" value="1"/>
</dbReference>
<dbReference type="FunFam" id="2.30.30.140:FF:000072">
    <property type="entry name" value="Scm like with four mbt domains 2"/>
    <property type="match status" value="1"/>
</dbReference>
<dbReference type="FunFam" id="1.10.150.50:FF:000027">
    <property type="entry name" value="scm-like with four MBT domains protein 2"/>
    <property type="match status" value="1"/>
</dbReference>
<dbReference type="Gene3D" id="2.30.30.140">
    <property type="match status" value="4"/>
</dbReference>
<dbReference type="Gene3D" id="3.90.1150.190">
    <property type="entry name" value="SLED domain"/>
    <property type="match status" value="1"/>
</dbReference>
<dbReference type="Gene3D" id="1.10.150.50">
    <property type="entry name" value="Transcription Factor, Ets-1"/>
    <property type="match status" value="1"/>
</dbReference>
<dbReference type="InterPro" id="IPR004092">
    <property type="entry name" value="Mbt"/>
</dbReference>
<dbReference type="InterPro" id="IPR047353">
    <property type="entry name" value="MBT_SFMBT2_rpt1"/>
</dbReference>
<dbReference type="InterPro" id="IPR047354">
    <property type="entry name" value="MBT_SFMBT2_rpt3"/>
</dbReference>
<dbReference type="InterPro" id="IPR047355">
    <property type="entry name" value="MBT_SFMBT2_rpt4"/>
</dbReference>
<dbReference type="InterPro" id="IPR050548">
    <property type="entry name" value="PcG_chromatin_remod_factors"/>
</dbReference>
<dbReference type="InterPro" id="IPR001660">
    <property type="entry name" value="SAM"/>
</dbReference>
<dbReference type="InterPro" id="IPR013761">
    <property type="entry name" value="SAM/pointed_sf"/>
</dbReference>
<dbReference type="InterPro" id="IPR037604">
    <property type="entry name" value="Scm-like-4MBT1/2_SAM"/>
</dbReference>
<dbReference type="InterPro" id="IPR021987">
    <property type="entry name" value="SLED"/>
</dbReference>
<dbReference type="InterPro" id="IPR038348">
    <property type="entry name" value="SLED_sf"/>
</dbReference>
<dbReference type="PANTHER" id="PTHR12247">
    <property type="entry name" value="POLYCOMB GROUP PROTEIN"/>
    <property type="match status" value="1"/>
</dbReference>
<dbReference type="PANTHER" id="PTHR12247:SF62">
    <property type="entry name" value="SCM-LIKE WITH FOUR MBT DOMAINS PROTEIN 2"/>
    <property type="match status" value="1"/>
</dbReference>
<dbReference type="Pfam" id="PF02820">
    <property type="entry name" value="MBT"/>
    <property type="match status" value="4"/>
</dbReference>
<dbReference type="Pfam" id="PF12140">
    <property type="entry name" value="SLED"/>
    <property type="match status" value="1"/>
</dbReference>
<dbReference type="SMART" id="SM00561">
    <property type="entry name" value="MBT"/>
    <property type="match status" value="4"/>
</dbReference>
<dbReference type="SMART" id="SM00454">
    <property type="entry name" value="SAM"/>
    <property type="match status" value="1"/>
</dbReference>
<dbReference type="SUPFAM" id="SSF47769">
    <property type="entry name" value="SAM/Pointed domain"/>
    <property type="match status" value="1"/>
</dbReference>
<dbReference type="SUPFAM" id="SSF63748">
    <property type="entry name" value="Tudor/PWWP/MBT"/>
    <property type="match status" value="4"/>
</dbReference>
<dbReference type="PROSITE" id="PS51079">
    <property type="entry name" value="MBT"/>
    <property type="match status" value="4"/>
</dbReference>
<organism>
    <name type="scientific">Mus musculus</name>
    <name type="common">Mouse</name>
    <dbReference type="NCBI Taxonomy" id="10090"/>
    <lineage>
        <taxon>Eukaryota</taxon>
        <taxon>Metazoa</taxon>
        <taxon>Chordata</taxon>
        <taxon>Craniata</taxon>
        <taxon>Vertebrata</taxon>
        <taxon>Euteleostomi</taxon>
        <taxon>Mammalia</taxon>
        <taxon>Eutheria</taxon>
        <taxon>Euarchontoglires</taxon>
        <taxon>Glires</taxon>
        <taxon>Rodentia</taxon>
        <taxon>Myomorpha</taxon>
        <taxon>Muroidea</taxon>
        <taxon>Muridae</taxon>
        <taxon>Murinae</taxon>
        <taxon>Mus</taxon>
        <taxon>Mus</taxon>
    </lineage>
</organism>
<accession>Q5DTW2</accession>
<accession>Q80VG7</accession>
<comment type="function">
    <text evidence="1">Transcriptional repressor of HOXB13 gene.</text>
</comment>
<comment type="subunit">
    <text evidence="1">Interacts with YY1. Interacts with methylated histones H3K9me2 and H4K20me2 (By similarity).</text>
</comment>
<comment type="subcellular location">
    <subcellularLocation>
        <location evidence="1">Nucleus</location>
    </subcellularLocation>
</comment>
<comment type="alternative products">
    <event type="alternative splicing"/>
    <isoform>
        <id>Q5DTW2-1</id>
        <name>1</name>
        <sequence type="displayed"/>
    </isoform>
    <isoform>
        <id>Q5DTW2-2</id>
        <name>2</name>
        <sequence type="described" ref="VSP_013858 VSP_013859"/>
    </isoform>
</comment>
<comment type="tissue specificity">
    <text evidence="3">Expressed in testis and, at much lower levels, in ovary.</text>
</comment>
<comment type="developmental stage">
    <text evidence="3">Overall, expression is high in extraembryonic tissues, and low in somatic tissues. Expression starts between 8-cell and blastocyst stages. At 7.5 dpc, highly expressed in the ectoplacental cone and, at much lower levels, in the embryonic and extraembryonic ectoderm. At 14.5 dpc, highly expressed in placenta and, at much lower levels, in the yolk sac. Expression in other tissues, including brain, heart, liver, kidney, gut and genital ridges, is very low. Expressed preferentially from the paternal allele in blastocysts, in various tissues at 7.5 dpc, as well as in yolk sac and placenta at 11.5 and 14.5 dpc. Biallelically expressed in brain and other somatic tissues at 11.5 and 14.5 dpc.</text>
</comment>
<comment type="miscellaneous">
    <text>Imprinted gene expressed from the paternal allele in blastocysts and in embryonic tissues early in development. Imprinting is lost in somatic tissues after 7.5 dpc.</text>
</comment>
<comment type="miscellaneous">
    <molecule>Isoform 2</molecule>
    <text evidence="5">Incomplete sequence.</text>
</comment>
<comment type="sequence caution" evidence="5">
    <conflict type="erroneous initiation">
        <sequence resource="EMBL-CDS" id="BAD90456"/>
    </conflict>
    <text>Extended N-terminus.</text>
</comment>
<reference key="1">
    <citation type="submission" date="2005-02" db="EMBL/GenBank/DDBJ databases">
        <title>Prediction of the coding sequences of mouse homologues of KIAA gene. The complete nucleotide sequences of mouse KIAA-homologous cDNAs identified by screening of terminal sequences of cDNA clones randomly sampled from size-fractionated libraries.</title>
        <authorList>
            <person name="Okazaki N."/>
            <person name="Kikuno R.F."/>
            <person name="Ohara R."/>
            <person name="Inamoto S."/>
            <person name="Nagase T."/>
            <person name="Ohara O."/>
            <person name="Koga H."/>
        </authorList>
    </citation>
    <scope>NUCLEOTIDE SEQUENCE [LARGE SCALE MRNA] (ISOFORM 1)</scope>
    <source>
        <tissue>Fetal brain</tissue>
    </source>
</reference>
<reference key="2">
    <citation type="journal article" date="2002" name="Genome Res.">
        <title>Gene expression profiling of embryo-derived stem cells reveals candidate genes associated with pluripotency and lineage specificity.</title>
        <authorList>
            <person name="Tanaka T.S."/>
            <person name="Kunath T."/>
            <person name="Kimber W.L."/>
            <person name="Jaradat S.A."/>
            <person name="Stagg C.A."/>
            <person name="Usuda M."/>
            <person name="Yokota T."/>
            <person name="Niwa H."/>
            <person name="Rossant J."/>
            <person name="Ko M.S."/>
        </authorList>
    </citation>
    <scope>NUCLEOTIDE SEQUENCE [LARGE SCALE MRNA] OF 443-938 (ISOFORM 2)</scope>
    <source>
        <strain>C57BL/6J</strain>
        <tissue>Ectoplacental cone</tissue>
    </source>
</reference>
<reference key="3">
    <citation type="journal article" date="2008" name="Gene Expr. Patterns">
        <title>The PcG gene Sfmbt2 is paternally expressed in extraembryonic tissues.</title>
        <authorList>
            <person name="Kuzmin A."/>
            <person name="Han Z."/>
            <person name="Golding M.C."/>
            <person name="Mann M.R."/>
            <person name="Latham K.E."/>
            <person name="Varmuza S."/>
        </authorList>
    </citation>
    <scope>INTERACTION WITH YY1</scope>
    <scope>TISSUE SPECIFICITY</scope>
    <scope>DEVELOPMENTAL STAGE</scope>
    <scope>IMPRINTING</scope>
    <scope>MISCELLANEOUS</scope>
</reference>
<protein>
    <recommendedName>
        <fullName>Scm-like with four MBT domains protein 2</fullName>
    </recommendedName>
</protein>